<proteinExistence type="evidence at protein level"/>
<comment type="function">
    <text>Functions in the N-end rule pathway of protein degradation where it conjugates Leu, Phe and, less efficiently, Met from aminoacyl-tRNAs to the N-termini of proteins containing an N-terminal arginine or lysine.</text>
</comment>
<comment type="catalytic activity">
    <reaction>
        <text>N-terminal L-lysyl-[protein] + L-leucyl-tRNA(Leu) = N-terminal L-leucyl-L-lysyl-[protein] + tRNA(Leu) + H(+)</text>
        <dbReference type="Rhea" id="RHEA:12340"/>
        <dbReference type="Rhea" id="RHEA-COMP:9613"/>
        <dbReference type="Rhea" id="RHEA-COMP:9622"/>
        <dbReference type="Rhea" id="RHEA-COMP:12670"/>
        <dbReference type="Rhea" id="RHEA-COMP:12671"/>
        <dbReference type="ChEBI" id="CHEBI:15378"/>
        <dbReference type="ChEBI" id="CHEBI:65249"/>
        <dbReference type="ChEBI" id="CHEBI:78442"/>
        <dbReference type="ChEBI" id="CHEBI:78494"/>
        <dbReference type="ChEBI" id="CHEBI:133043"/>
        <dbReference type="EC" id="2.3.2.6"/>
    </reaction>
</comment>
<comment type="catalytic activity">
    <reaction>
        <text>N-terminal L-arginyl-[protein] + L-leucyl-tRNA(Leu) = N-terminal L-leucyl-L-arginyl-[protein] + tRNA(Leu) + H(+)</text>
        <dbReference type="Rhea" id="RHEA:50416"/>
        <dbReference type="Rhea" id="RHEA-COMP:9613"/>
        <dbReference type="Rhea" id="RHEA-COMP:9622"/>
        <dbReference type="Rhea" id="RHEA-COMP:12672"/>
        <dbReference type="Rhea" id="RHEA-COMP:12673"/>
        <dbReference type="ChEBI" id="CHEBI:15378"/>
        <dbReference type="ChEBI" id="CHEBI:64719"/>
        <dbReference type="ChEBI" id="CHEBI:78442"/>
        <dbReference type="ChEBI" id="CHEBI:78494"/>
        <dbReference type="ChEBI" id="CHEBI:133044"/>
        <dbReference type="EC" id="2.3.2.6"/>
    </reaction>
</comment>
<comment type="catalytic activity">
    <reaction>
        <text>L-phenylalanyl-tRNA(Phe) + an N-terminal L-alpha-aminoacyl-[protein] = an N-terminal L-phenylalanyl-L-alpha-aminoacyl-[protein] + tRNA(Phe)</text>
        <dbReference type="Rhea" id="RHEA:43632"/>
        <dbReference type="Rhea" id="RHEA-COMP:9668"/>
        <dbReference type="Rhea" id="RHEA-COMP:9699"/>
        <dbReference type="Rhea" id="RHEA-COMP:10636"/>
        <dbReference type="Rhea" id="RHEA-COMP:10637"/>
        <dbReference type="ChEBI" id="CHEBI:78442"/>
        <dbReference type="ChEBI" id="CHEBI:78531"/>
        <dbReference type="ChEBI" id="CHEBI:78597"/>
        <dbReference type="ChEBI" id="CHEBI:83561"/>
        <dbReference type="EC" id="2.3.2.6"/>
    </reaction>
</comment>
<comment type="subunit">
    <text>Monomer.</text>
</comment>
<comment type="subcellular location">
    <subcellularLocation>
        <location>Cytoplasm</location>
    </subcellularLocation>
</comment>
<comment type="similarity">
    <text evidence="1">Belongs to the L/F-transferase family.</text>
</comment>
<feature type="chain" id="PRO_0000207217" description="Leucyl/phenylalanyl-tRNA--protein transferase">
    <location>
        <begin position="1"/>
        <end position="234"/>
    </location>
</feature>
<feature type="strand" evidence="2">
    <location>
        <begin position="3"/>
        <end position="5"/>
    </location>
</feature>
<feature type="helix" evidence="2">
    <location>
        <begin position="16"/>
        <end position="18"/>
    </location>
</feature>
<feature type="turn" evidence="2">
    <location>
        <begin position="21"/>
        <end position="25"/>
    </location>
</feature>
<feature type="strand" evidence="2">
    <location>
        <begin position="26"/>
        <end position="29"/>
    </location>
</feature>
<feature type="helix" evidence="2">
    <location>
        <begin position="35"/>
        <end position="43"/>
    </location>
</feature>
<feature type="strand" evidence="2">
    <location>
        <begin position="57"/>
        <end position="59"/>
    </location>
</feature>
<feature type="strand" evidence="2">
    <location>
        <begin position="62"/>
        <end position="67"/>
    </location>
</feature>
<feature type="helix" evidence="2">
    <location>
        <begin position="69"/>
        <end position="71"/>
    </location>
</feature>
<feature type="helix" evidence="2">
    <location>
        <begin position="76"/>
        <end position="83"/>
    </location>
</feature>
<feature type="strand" evidence="2">
    <location>
        <begin position="88"/>
        <end position="93"/>
    </location>
</feature>
<feature type="helix" evidence="2">
    <location>
        <begin position="95"/>
        <end position="103"/>
    </location>
</feature>
<feature type="strand" evidence="4">
    <location>
        <begin position="106"/>
        <end position="108"/>
    </location>
</feature>
<feature type="helix" evidence="3">
    <location>
        <begin position="109"/>
        <end position="111"/>
    </location>
</feature>
<feature type="helix" evidence="2">
    <location>
        <begin position="114"/>
        <end position="125"/>
    </location>
</feature>
<feature type="strand" evidence="2">
    <location>
        <begin position="128"/>
        <end position="136"/>
    </location>
</feature>
<feature type="strand" evidence="2">
    <location>
        <begin position="139"/>
        <end position="149"/>
    </location>
</feature>
<feature type="strand" evidence="2">
    <location>
        <begin position="152"/>
        <end position="162"/>
    </location>
</feature>
<feature type="helix" evidence="2">
    <location>
        <begin position="165"/>
        <end position="179"/>
    </location>
</feature>
<feature type="strand" evidence="2">
    <location>
        <begin position="184"/>
        <end position="189"/>
    </location>
</feature>
<feature type="helix" evidence="2">
    <location>
        <begin position="192"/>
        <end position="196"/>
    </location>
</feature>
<feature type="strand" evidence="2">
    <location>
        <begin position="200"/>
        <end position="202"/>
    </location>
</feature>
<feature type="helix" evidence="2">
    <location>
        <begin position="204"/>
        <end position="214"/>
    </location>
</feature>
<feature type="turn" evidence="2">
    <location>
        <begin position="221"/>
        <end position="224"/>
    </location>
</feature>
<feature type="strand" evidence="2">
    <location>
        <begin position="225"/>
        <end position="230"/>
    </location>
</feature>
<dbReference type="EC" id="2.3.2.6"/>
<dbReference type="EMBL" id="M63145">
    <property type="protein sequence ID" value="AAC36910.1"/>
    <property type="molecule type" value="Genomic_DNA"/>
</dbReference>
<dbReference type="EMBL" id="L10383">
    <property type="protein sequence ID" value="AAA03231.1"/>
    <property type="molecule type" value="Unassigned_DNA"/>
</dbReference>
<dbReference type="EMBL" id="U00096">
    <property type="protein sequence ID" value="AAC73971.1"/>
    <property type="molecule type" value="Genomic_DNA"/>
</dbReference>
<dbReference type="EMBL" id="AP009048">
    <property type="protein sequence ID" value="BAA35605.2"/>
    <property type="molecule type" value="Genomic_DNA"/>
</dbReference>
<dbReference type="PIR" id="A36888">
    <property type="entry name" value="A36888"/>
</dbReference>
<dbReference type="RefSeq" id="NP_415405.1">
    <property type="nucleotide sequence ID" value="NC_000913.3"/>
</dbReference>
<dbReference type="RefSeq" id="WP_001241678.1">
    <property type="nucleotide sequence ID" value="NZ_STEB01000006.1"/>
</dbReference>
<dbReference type="PDB" id="2CXA">
    <property type="method" value="X-ray"/>
    <property type="resolution" value="1.60 A"/>
    <property type="chains" value="A=1-234"/>
</dbReference>
<dbReference type="PDB" id="2DPS">
    <property type="method" value="X-ray"/>
    <property type="resolution" value="2.40 A"/>
    <property type="chains" value="A/B=1-234"/>
</dbReference>
<dbReference type="PDB" id="2DPT">
    <property type="method" value="X-ray"/>
    <property type="resolution" value="2.75 A"/>
    <property type="chains" value="A/B=1-234"/>
</dbReference>
<dbReference type="PDB" id="2Z3K">
    <property type="method" value="X-ray"/>
    <property type="resolution" value="2.85 A"/>
    <property type="chains" value="A/B=2-234"/>
</dbReference>
<dbReference type="PDB" id="2Z3L">
    <property type="method" value="X-ray"/>
    <property type="resolution" value="2.75 A"/>
    <property type="chains" value="A/B=2-234"/>
</dbReference>
<dbReference type="PDB" id="2Z3M">
    <property type="method" value="X-ray"/>
    <property type="resolution" value="2.70 A"/>
    <property type="chains" value="A/B=2-234"/>
</dbReference>
<dbReference type="PDB" id="2Z3N">
    <property type="method" value="X-ray"/>
    <property type="resolution" value="2.50 A"/>
    <property type="chains" value="A/B=2-234"/>
</dbReference>
<dbReference type="PDB" id="2Z3O">
    <property type="method" value="X-ray"/>
    <property type="resolution" value="2.40 A"/>
    <property type="chains" value="A/B=2-234"/>
</dbReference>
<dbReference type="PDB" id="2Z3P">
    <property type="method" value="X-ray"/>
    <property type="resolution" value="2.50 A"/>
    <property type="chains" value="A/B=2-234"/>
</dbReference>
<dbReference type="PDBsum" id="2CXA"/>
<dbReference type="PDBsum" id="2DPS"/>
<dbReference type="PDBsum" id="2DPT"/>
<dbReference type="PDBsum" id="2Z3K"/>
<dbReference type="PDBsum" id="2Z3L"/>
<dbReference type="PDBsum" id="2Z3M"/>
<dbReference type="PDBsum" id="2Z3N"/>
<dbReference type="PDBsum" id="2Z3O"/>
<dbReference type="PDBsum" id="2Z3P"/>
<dbReference type="SMR" id="P0A8P1"/>
<dbReference type="BioGRID" id="4259988">
    <property type="interactions" value="50"/>
</dbReference>
<dbReference type="BioGRID" id="849864">
    <property type="interactions" value="2"/>
</dbReference>
<dbReference type="DIP" id="DIP-48235N"/>
<dbReference type="FunCoup" id="P0A8P1">
    <property type="interactions" value="350"/>
</dbReference>
<dbReference type="IntAct" id="P0A8P1">
    <property type="interactions" value="10"/>
</dbReference>
<dbReference type="STRING" id="511145.b0885"/>
<dbReference type="DrugBank" id="DB08437">
    <property type="generic name" value="Puromycin"/>
</dbReference>
<dbReference type="jPOST" id="P0A8P1"/>
<dbReference type="PaxDb" id="511145-b0885"/>
<dbReference type="EnsemblBacteria" id="AAC73971">
    <property type="protein sequence ID" value="AAC73971"/>
    <property type="gene ID" value="b0885"/>
</dbReference>
<dbReference type="GeneID" id="75206174"/>
<dbReference type="GeneID" id="945490"/>
<dbReference type="KEGG" id="ecj:JW0868"/>
<dbReference type="KEGG" id="eco:b0885"/>
<dbReference type="KEGG" id="ecoc:C3026_05490"/>
<dbReference type="PATRIC" id="fig|1411691.4.peg.1393"/>
<dbReference type="EchoBASE" id="EB1103"/>
<dbReference type="eggNOG" id="COG2360">
    <property type="taxonomic scope" value="Bacteria"/>
</dbReference>
<dbReference type="InParanoid" id="P0A8P1"/>
<dbReference type="OMA" id="YRQGIFP"/>
<dbReference type="OrthoDB" id="9790282at2"/>
<dbReference type="PhylomeDB" id="P0A8P1"/>
<dbReference type="BioCyc" id="EcoCyc:EG11112-MONOMER"/>
<dbReference type="BioCyc" id="MetaCyc:EG11112-MONOMER"/>
<dbReference type="BRENDA" id="2.3.2.6">
    <property type="organism ID" value="2026"/>
</dbReference>
<dbReference type="EvolutionaryTrace" id="P0A8P1"/>
<dbReference type="PRO" id="PR:P0A8P1"/>
<dbReference type="Proteomes" id="UP000000625">
    <property type="component" value="Chromosome"/>
</dbReference>
<dbReference type="GO" id="GO:0005737">
    <property type="term" value="C:cytoplasm"/>
    <property type="evidence" value="ECO:0000314"/>
    <property type="project" value="EcoliWiki"/>
</dbReference>
<dbReference type="GO" id="GO:0016755">
    <property type="term" value="F:aminoacyltransferase activity"/>
    <property type="evidence" value="ECO:0000314"/>
    <property type="project" value="EcoliWiki"/>
</dbReference>
<dbReference type="GO" id="GO:0008914">
    <property type="term" value="F:leucyl-tRNA--protein transferase activity"/>
    <property type="evidence" value="ECO:0000314"/>
    <property type="project" value="EcoCyc"/>
</dbReference>
<dbReference type="GO" id="GO:0030163">
    <property type="term" value="P:protein catabolic process"/>
    <property type="evidence" value="ECO:0007669"/>
    <property type="project" value="UniProtKB-UniRule"/>
</dbReference>
<dbReference type="FunFam" id="3.30.70.3550:FF:000001">
    <property type="entry name" value="Leucyl/phenylalanyl-tRNA--protein transferase"/>
    <property type="match status" value="1"/>
</dbReference>
<dbReference type="FunFam" id="3.40.630.70:FF:000001">
    <property type="entry name" value="Leucyl/phenylalanyl-tRNA--protein transferase"/>
    <property type="match status" value="1"/>
</dbReference>
<dbReference type="Gene3D" id="3.40.630.70">
    <property type="entry name" value="Leucyl/phenylalanyl-tRNA-protein transferase, C-terminal domain"/>
    <property type="match status" value="1"/>
</dbReference>
<dbReference type="Gene3D" id="3.30.70.3550">
    <property type="entry name" value="Leucyl/phenylalanyl-tRNA-protein transferase, N-terminal domain"/>
    <property type="match status" value="1"/>
</dbReference>
<dbReference type="HAMAP" id="MF_00688">
    <property type="entry name" value="Leu_Phe_trans"/>
    <property type="match status" value="1"/>
</dbReference>
<dbReference type="InterPro" id="IPR016181">
    <property type="entry name" value="Acyl_CoA_acyltransferase"/>
</dbReference>
<dbReference type="InterPro" id="IPR004616">
    <property type="entry name" value="Leu/Phe-tRNA_Trfase"/>
</dbReference>
<dbReference type="InterPro" id="IPR042203">
    <property type="entry name" value="Leu/Phe-tRNA_Trfase_C"/>
</dbReference>
<dbReference type="InterPro" id="IPR042221">
    <property type="entry name" value="Leu/Phe-tRNA_Trfase_N"/>
</dbReference>
<dbReference type="NCBIfam" id="TIGR00667">
    <property type="entry name" value="aat"/>
    <property type="match status" value="1"/>
</dbReference>
<dbReference type="PANTHER" id="PTHR30098">
    <property type="entry name" value="LEUCYL/PHENYLALANYL-TRNA--PROTEIN TRANSFERASE"/>
    <property type="match status" value="1"/>
</dbReference>
<dbReference type="PANTHER" id="PTHR30098:SF2">
    <property type="entry name" value="LEUCYL_PHENYLALANYL-TRNA--PROTEIN TRANSFERASE"/>
    <property type="match status" value="1"/>
</dbReference>
<dbReference type="Pfam" id="PF03588">
    <property type="entry name" value="Leu_Phe_trans"/>
    <property type="match status" value="1"/>
</dbReference>
<dbReference type="SUPFAM" id="SSF55729">
    <property type="entry name" value="Acyl-CoA N-acyltransferases (Nat)"/>
    <property type="match status" value="1"/>
</dbReference>
<gene>
    <name type="primary">aat</name>
    <name type="synonym">ycaA</name>
    <name type="ordered locus">b0885</name>
    <name type="ordered locus">JW0868</name>
</gene>
<protein>
    <recommendedName>
        <fullName>Leucyl/phenylalanyl-tRNA--protein transferase</fullName>
        <ecNumber>2.3.2.6</ecNumber>
    </recommendedName>
    <alternativeName>
        <fullName>L/F-transferase</fullName>
    </alternativeName>
    <alternativeName>
        <fullName>Leucyltransferase</fullName>
    </alternativeName>
    <alternativeName>
        <fullName>Phenyalanyltransferase</fullName>
    </alternativeName>
</protein>
<reference key="1">
    <citation type="journal article" date="1991" name="J. Biol. Chem.">
        <title>Structure and expression of the infA operon encoding translational initiation factor IF1. Transcriptional control by growth rate.</title>
        <authorList>
            <person name="Cummings H.S."/>
            <person name="Sands J.F."/>
            <person name="Foreman P.C."/>
            <person name="Fraser J."/>
            <person name="Hershey J.W.B."/>
        </authorList>
    </citation>
    <scope>NUCLEOTIDE SEQUENCE [GENOMIC DNA]</scope>
</reference>
<reference key="2">
    <citation type="journal article" date="1993" name="J. Bacteriol.">
        <title>The N-end rule in Escherichia coli: cloning and analysis of the leucyl, phenylalanyl-tRNA-protein transferase gene aat.</title>
        <authorList>
            <person name="Shrader T.E."/>
            <person name="Tobias J.W."/>
            <person name="Varshavsky A."/>
        </authorList>
    </citation>
    <scope>NUCLEOTIDE SEQUENCE [GENOMIC DNA]</scope>
    <scope>CHARACTERIZATION</scope>
    <source>
        <strain>K12 / MC1061 / ATCC 53338 / DSM 7140</strain>
    </source>
</reference>
<reference key="3">
    <citation type="journal article" date="1996" name="DNA Res.">
        <title>A 718-kb DNA sequence of the Escherichia coli K-12 genome corresponding to the 12.7-28.0 min region on the linkage map.</title>
        <authorList>
            <person name="Oshima T."/>
            <person name="Aiba H."/>
            <person name="Baba T."/>
            <person name="Fujita K."/>
            <person name="Hayashi K."/>
            <person name="Honjo A."/>
            <person name="Ikemoto K."/>
            <person name="Inada T."/>
            <person name="Itoh T."/>
            <person name="Kajihara M."/>
            <person name="Kanai K."/>
            <person name="Kashimoto K."/>
            <person name="Kimura S."/>
            <person name="Kitagawa M."/>
            <person name="Makino K."/>
            <person name="Masuda S."/>
            <person name="Miki T."/>
            <person name="Mizobuchi K."/>
            <person name="Mori H."/>
            <person name="Motomura K."/>
            <person name="Nakamura Y."/>
            <person name="Nashimoto H."/>
            <person name="Nishio Y."/>
            <person name="Saito N."/>
            <person name="Sampei G."/>
            <person name="Seki Y."/>
            <person name="Tagami H."/>
            <person name="Takemoto K."/>
            <person name="Wada C."/>
            <person name="Yamamoto Y."/>
            <person name="Yano M."/>
            <person name="Horiuchi T."/>
        </authorList>
    </citation>
    <scope>NUCLEOTIDE SEQUENCE [LARGE SCALE GENOMIC DNA]</scope>
    <source>
        <strain>K12 / W3110 / ATCC 27325 / DSM 5911</strain>
    </source>
</reference>
<reference key="4">
    <citation type="journal article" date="1997" name="Science">
        <title>The complete genome sequence of Escherichia coli K-12.</title>
        <authorList>
            <person name="Blattner F.R."/>
            <person name="Plunkett G. III"/>
            <person name="Bloch C.A."/>
            <person name="Perna N.T."/>
            <person name="Burland V."/>
            <person name="Riley M."/>
            <person name="Collado-Vides J."/>
            <person name="Glasner J.D."/>
            <person name="Rode C.K."/>
            <person name="Mayhew G.F."/>
            <person name="Gregor J."/>
            <person name="Davis N.W."/>
            <person name="Kirkpatrick H.A."/>
            <person name="Goeden M.A."/>
            <person name="Rose D.J."/>
            <person name="Mau B."/>
            <person name="Shao Y."/>
        </authorList>
    </citation>
    <scope>NUCLEOTIDE SEQUENCE [LARGE SCALE GENOMIC DNA]</scope>
    <source>
        <strain>K12 / MG1655 / ATCC 47076</strain>
    </source>
</reference>
<reference key="5">
    <citation type="journal article" date="2006" name="Mol. Syst. Biol.">
        <title>Highly accurate genome sequences of Escherichia coli K-12 strains MG1655 and W3110.</title>
        <authorList>
            <person name="Hayashi K."/>
            <person name="Morooka N."/>
            <person name="Yamamoto Y."/>
            <person name="Fujita K."/>
            <person name="Isono K."/>
            <person name="Choi S."/>
            <person name="Ohtsubo E."/>
            <person name="Baba T."/>
            <person name="Wanner B.L."/>
            <person name="Mori H."/>
            <person name="Horiuchi T."/>
        </authorList>
    </citation>
    <scope>NUCLEOTIDE SEQUENCE [LARGE SCALE GENOMIC DNA]</scope>
    <source>
        <strain>K12 / W3110 / ATCC 27325 / DSM 5911</strain>
    </source>
</reference>
<reference key="6">
    <citation type="journal article" date="1995" name="J. Biol. Chem.">
        <title>The leucyl/phenylalanyl-tRNA-protein transferase. Overexpression and characterization of substrate recognition, domain structure, and secondary structure.</title>
        <authorList>
            <person name="Abramochkin G."/>
            <person name="Shrader T.E."/>
        </authorList>
    </citation>
    <scope>CHARACTERIZATION</scope>
    <source>
        <strain>K12</strain>
    </source>
</reference>
<sequence>MRLVQLSRHSIAFPSPEGALREPNGLLALGGDLSPARLLMAYQRGIFPWFSPGDPILWWSPDPRAVLWPESLHISRSMKRFHKRSPYRVTMNYAFGQVIEGCASDREEGTWITRGVVEAYHRLHELGHAHSIEVWREDELVGGMYGVAQGTLFCGESMFSRMENASKTALLVFCEEFIGHGGKLIDCQVLNDHTASLGACEIPRRDYLNYLNQMRLGRLPNNFWVPRCLFSPQE</sequence>
<name>LFTR_ECOLI</name>
<evidence type="ECO:0000305" key="1"/>
<evidence type="ECO:0007829" key="2">
    <source>
        <dbReference type="PDB" id="2CXA"/>
    </source>
</evidence>
<evidence type="ECO:0007829" key="3">
    <source>
        <dbReference type="PDB" id="2Z3O"/>
    </source>
</evidence>
<evidence type="ECO:0007829" key="4">
    <source>
        <dbReference type="PDB" id="2Z3P"/>
    </source>
</evidence>
<accession>P0A8P1</accession>
<accession>P23885</accession>
<keyword id="KW-0002">3D-structure</keyword>
<keyword id="KW-0012">Acyltransferase</keyword>
<keyword id="KW-0963">Cytoplasm</keyword>
<keyword id="KW-1185">Reference proteome</keyword>
<keyword id="KW-0808">Transferase</keyword>
<organism>
    <name type="scientific">Escherichia coli (strain K12)</name>
    <dbReference type="NCBI Taxonomy" id="83333"/>
    <lineage>
        <taxon>Bacteria</taxon>
        <taxon>Pseudomonadati</taxon>
        <taxon>Pseudomonadota</taxon>
        <taxon>Gammaproteobacteria</taxon>
        <taxon>Enterobacterales</taxon>
        <taxon>Enterobacteriaceae</taxon>
        <taxon>Escherichia</taxon>
    </lineage>
</organism>